<keyword id="KW-0010">Activator</keyword>
<keyword id="KW-0963">Cytoplasm</keyword>
<keyword id="KW-0238">DNA-binding</keyword>
<keyword id="KW-0677">Repeat</keyword>
<keyword id="KW-0684">Rhamnose metabolism</keyword>
<keyword id="KW-0804">Transcription</keyword>
<keyword id="KW-0805">Transcription regulation</keyword>
<reference key="1">
    <citation type="journal article" date="2006" name="J. Bacteriol.">
        <title>Complete genome sequence of Yersinia pestis strains Antiqua and Nepal516: evidence of gene reduction in an emerging pathogen.</title>
        <authorList>
            <person name="Chain P.S.G."/>
            <person name="Hu P."/>
            <person name="Malfatti S.A."/>
            <person name="Radnedge L."/>
            <person name="Larimer F."/>
            <person name="Vergez L.M."/>
            <person name="Worsham P."/>
            <person name="Chu M.C."/>
            <person name="Andersen G.L."/>
        </authorList>
    </citation>
    <scope>NUCLEOTIDE SEQUENCE [LARGE SCALE GENOMIC DNA]</scope>
    <source>
        <strain>Antiqua</strain>
    </source>
</reference>
<name>RHAS_YERPA</name>
<accession>Q1C0W1</accession>
<organism>
    <name type="scientific">Yersinia pestis bv. Antiqua (strain Antiqua)</name>
    <dbReference type="NCBI Taxonomy" id="360102"/>
    <lineage>
        <taxon>Bacteria</taxon>
        <taxon>Pseudomonadati</taxon>
        <taxon>Pseudomonadota</taxon>
        <taxon>Gammaproteobacteria</taxon>
        <taxon>Enterobacterales</taxon>
        <taxon>Yersiniaceae</taxon>
        <taxon>Yersinia</taxon>
    </lineage>
</organism>
<gene>
    <name evidence="1" type="primary">rhaS</name>
    <name type="ordered locus">YPA_3950</name>
</gene>
<dbReference type="EMBL" id="CP000308">
    <property type="protein sequence ID" value="ABG15911.1"/>
    <property type="molecule type" value="Genomic_DNA"/>
</dbReference>
<dbReference type="RefSeq" id="WP_002209108.1">
    <property type="nucleotide sequence ID" value="NZ_CP009906.1"/>
</dbReference>
<dbReference type="SMR" id="Q1C0W1"/>
<dbReference type="GeneID" id="57974273"/>
<dbReference type="KEGG" id="ypa:YPA_3950"/>
<dbReference type="Proteomes" id="UP000001971">
    <property type="component" value="Chromosome"/>
</dbReference>
<dbReference type="GO" id="GO:0005737">
    <property type="term" value="C:cytoplasm"/>
    <property type="evidence" value="ECO:0007669"/>
    <property type="project" value="UniProtKB-SubCell"/>
</dbReference>
<dbReference type="GO" id="GO:0003700">
    <property type="term" value="F:DNA-binding transcription factor activity"/>
    <property type="evidence" value="ECO:0007669"/>
    <property type="project" value="UniProtKB-UniRule"/>
</dbReference>
<dbReference type="GO" id="GO:0043565">
    <property type="term" value="F:sequence-specific DNA binding"/>
    <property type="evidence" value="ECO:0007669"/>
    <property type="project" value="InterPro"/>
</dbReference>
<dbReference type="GO" id="GO:0045893">
    <property type="term" value="P:positive regulation of DNA-templated transcription"/>
    <property type="evidence" value="ECO:0007669"/>
    <property type="project" value="UniProtKB-UniRule"/>
</dbReference>
<dbReference type="GO" id="GO:0019299">
    <property type="term" value="P:rhamnose metabolic process"/>
    <property type="evidence" value="ECO:0007669"/>
    <property type="project" value="UniProtKB-UniRule"/>
</dbReference>
<dbReference type="CDD" id="cd06977">
    <property type="entry name" value="cupin_RhaR_RhaS-like_N"/>
    <property type="match status" value="1"/>
</dbReference>
<dbReference type="Gene3D" id="1.10.10.60">
    <property type="entry name" value="Homeodomain-like"/>
    <property type="match status" value="1"/>
</dbReference>
<dbReference type="Gene3D" id="2.60.120.10">
    <property type="entry name" value="Jelly Rolls"/>
    <property type="match status" value="1"/>
</dbReference>
<dbReference type="HAMAP" id="MF_01534">
    <property type="entry name" value="HTH_type_RhaS"/>
    <property type="match status" value="1"/>
</dbReference>
<dbReference type="InterPro" id="IPR003313">
    <property type="entry name" value="AraC-bd"/>
</dbReference>
<dbReference type="InterPro" id="IPR050204">
    <property type="entry name" value="AraC_XylS_family_regulators"/>
</dbReference>
<dbReference type="InterPro" id="IPR009057">
    <property type="entry name" value="Homeodomain-like_sf"/>
</dbReference>
<dbReference type="InterPro" id="IPR037923">
    <property type="entry name" value="HTH-like"/>
</dbReference>
<dbReference type="InterPro" id="IPR018060">
    <property type="entry name" value="HTH_AraC"/>
</dbReference>
<dbReference type="InterPro" id="IPR047220">
    <property type="entry name" value="RhaR_RhaS-like_N"/>
</dbReference>
<dbReference type="InterPro" id="IPR014710">
    <property type="entry name" value="RmlC-like_jellyroll"/>
</dbReference>
<dbReference type="InterPro" id="IPR020449">
    <property type="entry name" value="Tscrpt_reg_AraC-type_HTH"/>
</dbReference>
<dbReference type="InterPro" id="IPR023609">
    <property type="entry name" value="Tscrpt_reg_HTH_RhaS"/>
</dbReference>
<dbReference type="NCBIfam" id="NF010028">
    <property type="entry name" value="PRK13503.1"/>
    <property type="match status" value="1"/>
</dbReference>
<dbReference type="PANTHER" id="PTHR46796:SF13">
    <property type="entry name" value="HTH-TYPE TRANSCRIPTIONAL ACTIVATOR RHAS"/>
    <property type="match status" value="1"/>
</dbReference>
<dbReference type="PANTHER" id="PTHR46796">
    <property type="entry name" value="HTH-TYPE TRANSCRIPTIONAL ACTIVATOR RHAS-RELATED"/>
    <property type="match status" value="1"/>
</dbReference>
<dbReference type="Pfam" id="PF02311">
    <property type="entry name" value="AraC_binding"/>
    <property type="match status" value="1"/>
</dbReference>
<dbReference type="Pfam" id="PF12833">
    <property type="entry name" value="HTH_18"/>
    <property type="match status" value="1"/>
</dbReference>
<dbReference type="PRINTS" id="PR00032">
    <property type="entry name" value="HTHARAC"/>
</dbReference>
<dbReference type="SMART" id="SM00342">
    <property type="entry name" value="HTH_ARAC"/>
    <property type="match status" value="1"/>
</dbReference>
<dbReference type="SUPFAM" id="SSF46689">
    <property type="entry name" value="Homeodomain-like"/>
    <property type="match status" value="2"/>
</dbReference>
<dbReference type="SUPFAM" id="SSF51215">
    <property type="entry name" value="Regulatory protein AraC"/>
    <property type="match status" value="1"/>
</dbReference>
<dbReference type="PROSITE" id="PS01124">
    <property type="entry name" value="HTH_ARAC_FAMILY_2"/>
    <property type="match status" value="1"/>
</dbReference>
<protein>
    <recommendedName>
        <fullName evidence="1">HTH-type transcriptional activator RhaS</fullName>
    </recommendedName>
    <alternativeName>
        <fullName evidence="1">L-rhamnose operon regulatory protein RhaS</fullName>
    </alternativeName>
</protein>
<comment type="function">
    <text evidence="1">Activates expression of the rhaBAD and rhaT operons.</text>
</comment>
<comment type="subunit">
    <text evidence="1">Binds DNA as a dimer.</text>
</comment>
<comment type="subcellular location">
    <subcellularLocation>
        <location evidence="1">Cytoplasm</location>
    </subcellularLocation>
</comment>
<evidence type="ECO:0000255" key="1">
    <source>
        <dbReference type="HAMAP-Rule" id="MF_01534"/>
    </source>
</evidence>
<sequence length="273" mass="31393">MTVLHSIDFFSSSSAPVAIEARAPQSAFPEHHHDFYEIVIVEEGAGVHVFNGNPYTLSRGCVCFVRDHDRHLFESTDDLFLTNVLFRAPDAFRFLSGVGHFLPRECDGVYPSHWRVNGQVLQQIKCLIACLEHAPKSDQVEDIALHESVFMQLLVKLWQGCQTQVGDDQEGRLYQLLDWLQNNYSEAVEWPELADRFALPLRTLHRQLKNKTGMTPQRYLTRLHLLQARHQLCYSDNSVTDIAYLCGFGDSNHFSTLFKREFSQSPRDLRSQL</sequence>
<proteinExistence type="inferred from homology"/>
<feature type="chain" id="PRO_1000068712" description="HTH-type transcriptional activator RhaS">
    <location>
        <begin position="1"/>
        <end position="273"/>
    </location>
</feature>
<feature type="domain" description="HTH araC/xylS-type" evidence="1">
    <location>
        <begin position="174"/>
        <end position="272"/>
    </location>
</feature>
<feature type="DNA-binding region" description="H-T-H motif" evidence="1">
    <location>
        <begin position="191"/>
        <end position="212"/>
    </location>
</feature>
<feature type="DNA-binding region" description="H-T-H motif" evidence="1">
    <location>
        <begin position="239"/>
        <end position="262"/>
    </location>
</feature>
<feature type="site" description="Interaction with sigma-70" evidence="1">
    <location>
        <position position="241"/>
    </location>
</feature>
<feature type="site" description="Interaction with sigma-70" evidence="1">
    <location>
        <position position="250"/>
    </location>
</feature>